<evidence type="ECO:0000255" key="1"/>
<evidence type="ECO:0000305" key="2"/>
<gene>
    <name type="primary">Prss16</name>
    <name type="synonym">Tssp</name>
</gene>
<comment type="function">
    <text>Protease that may play a role in T-cell development.</text>
</comment>
<comment type="subcellular location">
    <subcellularLocation>
        <location>Cytoplasmic vesicle</location>
    </subcellularLocation>
    <text>Vesicular, either lysosomal or endosomal.</text>
</comment>
<comment type="tissue specificity">
    <text>Expressed predominantly in cortical thymic epithelial cells, with highest expression around vessels and the thymic capsule.</text>
</comment>
<comment type="developmental stage">
    <text>Expressed in developing thymus at 14 to 18 dpc, with maximal expression at 16 dpc.</text>
</comment>
<comment type="similarity">
    <text evidence="2">Belongs to the peptidase S28 family.</text>
</comment>
<sequence length="509" mass="54523">MAVKAPWLGFLLLVSLWGLSTPALLLRRLREHIQKFQESSSLHPGFGLGHGPGAVPKQGWLEQPLDPFNASDRRTFLQRYWVNDQHRTGQDVPVFLHIGGEGSLGPGSVMAGHPAALAPAWGALVISLEHRFYGLSMPAGGLDLALLRYLSSRHALADVASARQALSGLLNVSSSSPWICFGGSYAGSLATWARLKFPHLVFAAVASSAPLSAVVDFSAYNQVVARSLTQVAIGGSLECLAAASTAFTEVERLLRAGPAAQAVLREELGACGSLDLTEDQAELLGALQALVGGTVQYDGQAGAPLSVRQLCGLLLGKWGNRSRSTPYLGLRRAVQIVLRSMGQKCLSFSRAETVAQLSNTEPQVSGVGDRQWLYQTCTEFGFYVTCEGLQCPFSQLPALPFQLELCEQVFGLSPASVAQAVAQTNSYYGGQSPGATQVLFVNGDTDPWHVLSVTQDLGLSEPALLIPSASHCFDMAPMRPSDSPSLRLGRQKISQQLQDWLKDIKKSQS</sequence>
<organism>
    <name type="scientific">Mus musculus</name>
    <name type="common">Mouse</name>
    <dbReference type="NCBI Taxonomy" id="10090"/>
    <lineage>
        <taxon>Eukaryota</taxon>
        <taxon>Metazoa</taxon>
        <taxon>Chordata</taxon>
        <taxon>Craniata</taxon>
        <taxon>Vertebrata</taxon>
        <taxon>Euteleostomi</taxon>
        <taxon>Mammalia</taxon>
        <taxon>Eutheria</taxon>
        <taxon>Euarchontoglires</taxon>
        <taxon>Glires</taxon>
        <taxon>Rodentia</taxon>
        <taxon>Myomorpha</taxon>
        <taxon>Muroidea</taxon>
        <taxon>Muridae</taxon>
        <taxon>Murinae</taxon>
        <taxon>Mus</taxon>
        <taxon>Mus</taxon>
    </lineage>
</organism>
<feature type="signal peptide" evidence="1">
    <location>
        <begin position="1"/>
        <end position="22"/>
    </location>
</feature>
<feature type="chain" id="PRO_0000027321" description="Thymus-specific serine protease">
    <location>
        <begin position="23"/>
        <end position="509"/>
    </location>
</feature>
<feature type="active site" description="Charge relay system" evidence="1">
    <location>
        <position position="184"/>
    </location>
</feature>
<feature type="active site" description="Charge relay system" evidence="1">
    <location>
        <position position="446"/>
    </location>
</feature>
<feature type="active site" description="Charge relay system" evidence="1">
    <location>
        <position position="471"/>
    </location>
</feature>
<feature type="glycosylation site" description="N-linked (GlcNAc...) asparagine" evidence="1">
    <location>
        <position position="69"/>
    </location>
</feature>
<feature type="glycosylation site" description="N-linked (GlcNAc...) asparagine" evidence="1">
    <location>
        <position position="171"/>
    </location>
</feature>
<feature type="glycosylation site" description="N-linked (GlcNAc...) asparagine" evidence="1">
    <location>
        <position position="320"/>
    </location>
</feature>
<accession>Q9QXE5</accession>
<dbReference type="EC" id="3.4.-.-"/>
<dbReference type="EMBL" id="AJ131775">
    <property type="protein sequence ID" value="CAB66137.1"/>
    <property type="molecule type" value="mRNA"/>
</dbReference>
<dbReference type="EMBL" id="AK088019">
    <property type="protein sequence ID" value="BAC40100.1"/>
    <property type="molecule type" value="mRNA"/>
</dbReference>
<dbReference type="CCDS" id="CCDS26303.1"/>
<dbReference type="RefSeq" id="NP_062302.1">
    <property type="nucleotide sequence ID" value="NM_019429.2"/>
</dbReference>
<dbReference type="SMR" id="Q9QXE5"/>
<dbReference type="FunCoup" id="Q9QXE5">
    <property type="interactions" value="501"/>
</dbReference>
<dbReference type="STRING" id="10090.ENSMUSP00000006341"/>
<dbReference type="ESTHER" id="mouse-tssp">
    <property type="family name" value="Prolylcarboxypeptidase"/>
</dbReference>
<dbReference type="MEROPS" id="S28.003"/>
<dbReference type="GlyCosmos" id="Q9QXE5">
    <property type="glycosylation" value="3 sites, No reported glycans"/>
</dbReference>
<dbReference type="GlyGen" id="Q9QXE5">
    <property type="glycosylation" value="3 sites"/>
</dbReference>
<dbReference type="iPTMnet" id="Q9QXE5"/>
<dbReference type="PhosphoSitePlus" id="Q9QXE5"/>
<dbReference type="jPOST" id="Q9QXE5"/>
<dbReference type="PaxDb" id="10090-ENSMUSP00000006341"/>
<dbReference type="ProteomicsDB" id="298321"/>
<dbReference type="Antibodypedia" id="1724">
    <property type="antibodies" value="100 antibodies from 21 providers"/>
</dbReference>
<dbReference type="DNASU" id="54373"/>
<dbReference type="Ensembl" id="ENSMUST00000006341.4">
    <property type="protein sequence ID" value="ENSMUSP00000006341.3"/>
    <property type="gene ID" value="ENSMUSG00000006179.10"/>
</dbReference>
<dbReference type="GeneID" id="54373"/>
<dbReference type="KEGG" id="mmu:54373"/>
<dbReference type="UCSC" id="uc007prz.1">
    <property type="organism name" value="mouse"/>
</dbReference>
<dbReference type="AGR" id="MGI:1859181"/>
<dbReference type="CTD" id="10279"/>
<dbReference type="MGI" id="MGI:1859181">
    <property type="gene designation" value="Prss16"/>
</dbReference>
<dbReference type="VEuPathDB" id="HostDB:ENSMUSG00000006179"/>
<dbReference type="eggNOG" id="KOG2182">
    <property type="taxonomic scope" value="Eukaryota"/>
</dbReference>
<dbReference type="GeneTree" id="ENSGT00940000160281"/>
<dbReference type="HOGENOM" id="CLU_020959_3_1_1"/>
<dbReference type="InParanoid" id="Q9QXE5"/>
<dbReference type="OMA" id="WQYCSEW"/>
<dbReference type="OrthoDB" id="1735038at2759"/>
<dbReference type="PhylomeDB" id="Q9QXE5"/>
<dbReference type="TreeFam" id="TF314855"/>
<dbReference type="BioGRID-ORCS" id="54373">
    <property type="hits" value="2 hits in 78 CRISPR screens"/>
</dbReference>
<dbReference type="PRO" id="PR:Q9QXE5"/>
<dbReference type="Proteomes" id="UP000000589">
    <property type="component" value="Chromosome 13"/>
</dbReference>
<dbReference type="RNAct" id="Q9QXE5">
    <property type="molecule type" value="protein"/>
</dbReference>
<dbReference type="Bgee" id="ENSMUSG00000006179">
    <property type="expression patterns" value="Expressed in thymus and 60 other cell types or tissues"/>
</dbReference>
<dbReference type="ExpressionAtlas" id="Q9QXE5">
    <property type="expression patterns" value="baseline and differential"/>
</dbReference>
<dbReference type="GO" id="GO:0005768">
    <property type="term" value="C:endosome"/>
    <property type="evidence" value="ECO:0000314"/>
    <property type="project" value="UniProtKB"/>
</dbReference>
<dbReference type="GO" id="GO:0005764">
    <property type="term" value="C:lysosome"/>
    <property type="evidence" value="ECO:0000314"/>
    <property type="project" value="UniProtKB"/>
</dbReference>
<dbReference type="GO" id="GO:0070008">
    <property type="term" value="F:serine-type exopeptidase activity"/>
    <property type="evidence" value="ECO:0007669"/>
    <property type="project" value="InterPro"/>
</dbReference>
<dbReference type="GO" id="GO:0006508">
    <property type="term" value="P:proteolysis"/>
    <property type="evidence" value="ECO:0007669"/>
    <property type="project" value="UniProtKB-KW"/>
</dbReference>
<dbReference type="FunFam" id="3.40.50.1820:FF:000200">
    <property type="entry name" value="Serine protease 16"/>
    <property type="match status" value="1"/>
</dbReference>
<dbReference type="FunFam" id="1.20.120.980:FF:000004">
    <property type="entry name" value="Thymus-specific serine protease"/>
    <property type="match status" value="1"/>
</dbReference>
<dbReference type="Gene3D" id="3.40.50.1820">
    <property type="entry name" value="alpha/beta hydrolase"/>
    <property type="match status" value="1"/>
</dbReference>
<dbReference type="Gene3D" id="1.20.120.980">
    <property type="entry name" value="Serine carboxypeptidase S28, SKS domain"/>
    <property type="match status" value="1"/>
</dbReference>
<dbReference type="InterPro" id="IPR029058">
    <property type="entry name" value="AB_hydrolase_fold"/>
</dbReference>
<dbReference type="InterPro" id="IPR008758">
    <property type="entry name" value="Peptidase_S28"/>
</dbReference>
<dbReference type="InterPro" id="IPR042269">
    <property type="entry name" value="Ser_carbopepase_S28_SKS"/>
</dbReference>
<dbReference type="PANTHER" id="PTHR11010">
    <property type="entry name" value="PROTEASE S28 PRO-X CARBOXYPEPTIDASE-RELATED"/>
    <property type="match status" value="1"/>
</dbReference>
<dbReference type="PANTHER" id="PTHR11010:SF11">
    <property type="entry name" value="THYMUS-SPECIFIC SERINE PROTEASE"/>
    <property type="match status" value="1"/>
</dbReference>
<dbReference type="Pfam" id="PF05577">
    <property type="entry name" value="Peptidase_S28"/>
    <property type="match status" value="1"/>
</dbReference>
<dbReference type="SUPFAM" id="SSF53474">
    <property type="entry name" value="alpha/beta-Hydrolases"/>
    <property type="match status" value="1"/>
</dbReference>
<keyword id="KW-0968">Cytoplasmic vesicle</keyword>
<keyword id="KW-0325">Glycoprotein</keyword>
<keyword id="KW-0378">Hydrolase</keyword>
<keyword id="KW-0645">Protease</keyword>
<keyword id="KW-1185">Reference proteome</keyword>
<keyword id="KW-0720">Serine protease</keyword>
<keyword id="KW-0732">Signal</keyword>
<reference key="1">
    <citation type="journal article" date="1999" name="Immunogenetics">
        <title>Differential gene expression in CD3epsilon- and RAG1-deficient thymuses: definition of a set of genes potentially involved in thymocyte maturation.</title>
        <authorList>
            <person name="Carrier A."/>
            <person name="Nguyen C."/>
            <person name="Victorero G."/>
            <person name="Granjeaud S."/>
            <person name="Rocha D."/>
            <person name="Bernard K."/>
            <person name="Miazek A."/>
            <person name="Ferrier P."/>
            <person name="Malissen M."/>
            <person name="Naquet P."/>
            <person name="Malissen B."/>
            <person name="Jordan B.R."/>
        </authorList>
    </citation>
    <scope>NUCLEOTIDE SEQUENCE [MRNA]</scope>
    <source>
        <strain>C57BL/6J</strain>
        <tissue>Embryonic thymus</tissue>
    </source>
</reference>
<reference key="2">
    <citation type="journal article" date="2005" name="Science">
        <title>The transcriptional landscape of the mammalian genome.</title>
        <authorList>
            <person name="Carninci P."/>
            <person name="Kasukawa T."/>
            <person name="Katayama S."/>
            <person name="Gough J."/>
            <person name="Frith M.C."/>
            <person name="Maeda N."/>
            <person name="Oyama R."/>
            <person name="Ravasi T."/>
            <person name="Lenhard B."/>
            <person name="Wells C."/>
            <person name="Kodzius R."/>
            <person name="Shimokawa K."/>
            <person name="Bajic V.B."/>
            <person name="Brenner S.E."/>
            <person name="Batalov S."/>
            <person name="Forrest A.R."/>
            <person name="Zavolan M."/>
            <person name="Davis M.J."/>
            <person name="Wilming L.G."/>
            <person name="Aidinis V."/>
            <person name="Allen J.E."/>
            <person name="Ambesi-Impiombato A."/>
            <person name="Apweiler R."/>
            <person name="Aturaliya R.N."/>
            <person name="Bailey T.L."/>
            <person name="Bansal M."/>
            <person name="Baxter L."/>
            <person name="Beisel K.W."/>
            <person name="Bersano T."/>
            <person name="Bono H."/>
            <person name="Chalk A.M."/>
            <person name="Chiu K.P."/>
            <person name="Choudhary V."/>
            <person name="Christoffels A."/>
            <person name="Clutterbuck D.R."/>
            <person name="Crowe M.L."/>
            <person name="Dalla E."/>
            <person name="Dalrymple B.P."/>
            <person name="de Bono B."/>
            <person name="Della Gatta G."/>
            <person name="di Bernardo D."/>
            <person name="Down T."/>
            <person name="Engstrom P."/>
            <person name="Fagiolini M."/>
            <person name="Faulkner G."/>
            <person name="Fletcher C.F."/>
            <person name="Fukushima T."/>
            <person name="Furuno M."/>
            <person name="Futaki S."/>
            <person name="Gariboldi M."/>
            <person name="Georgii-Hemming P."/>
            <person name="Gingeras T.R."/>
            <person name="Gojobori T."/>
            <person name="Green R.E."/>
            <person name="Gustincich S."/>
            <person name="Harbers M."/>
            <person name="Hayashi Y."/>
            <person name="Hensch T.K."/>
            <person name="Hirokawa N."/>
            <person name="Hill D."/>
            <person name="Huminiecki L."/>
            <person name="Iacono M."/>
            <person name="Ikeo K."/>
            <person name="Iwama A."/>
            <person name="Ishikawa T."/>
            <person name="Jakt M."/>
            <person name="Kanapin A."/>
            <person name="Katoh M."/>
            <person name="Kawasawa Y."/>
            <person name="Kelso J."/>
            <person name="Kitamura H."/>
            <person name="Kitano H."/>
            <person name="Kollias G."/>
            <person name="Krishnan S.P."/>
            <person name="Kruger A."/>
            <person name="Kummerfeld S.K."/>
            <person name="Kurochkin I.V."/>
            <person name="Lareau L.F."/>
            <person name="Lazarevic D."/>
            <person name="Lipovich L."/>
            <person name="Liu J."/>
            <person name="Liuni S."/>
            <person name="McWilliam S."/>
            <person name="Madan Babu M."/>
            <person name="Madera M."/>
            <person name="Marchionni L."/>
            <person name="Matsuda H."/>
            <person name="Matsuzawa S."/>
            <person name="Miki H."/>
            <person name="Mignone F."/>
            <person name="Miyake S."/>
            <person name="Morris K."/>
            <person name="Mottagui-Tabar S."/>
            <person name="Mulder N."/>
            <person name="Nakano N."/>
            <person name="Nakauchi H."/>
            <person name="Ng P."/>
            <person name="Nilsson R."/>
            <person name="Nishiguchi S."/>
            <person name="Nishikawa S."/>
            <person name="Nori F."/>
            <person name="Ohara O."/>
            <person name="Okazaki Y."/>
            <person name="Orlando V."/>
            <person name="Pang K.C."/>
            <person name="Pavan W.J."/>
            <person name="Pavesi G."/>
            <person name="Pesole G."/>
            <person name="Petrovsky N."/>
            <person name="Piazza S."/>
            <person name="Reed J."/>
            <person name="Reid J.F."/>
            <person name="Ring B.Z."/>
            <person name="Ringwald M."/>
            <person name="Rost B."/>
            <person name="Ruan Y."/>
            <person name="Salzberg S.L."/>
            <person name="Sandelin A."/>
            <person name="Schneider C."/>
            <person name="Schoenbach C."/>
            <person name="Sekiguchi K."/>
            <person name="Semple C.A."/>
            <person name="Seno S."/>
            <person name="Sessa L."/>
            <person name="Sheng Y."/>
            <person name="Shibata Y."/>
            <person name="Shimada H."/>
            <person name="Shimada K."/>
            <person name="Silva D."/>
            <person name="Sinclair B."/>
            <person name="Sperling S."/>
            <person name="Stupka E."/>
            <person name="Sugiura K."/>
            <person name="Sultana R."/>
            <person name="Takenaka Y."/>
            <person name="Taki K."/>
            <person name="Tammoja K."/>
            <person name="Tan S.L."/>
            <person name="Tang S."/>
            <person name="Taylor M.S."/>
            <person name="Tegner J."/>
            <person name="Teichmann S.A."/>
            <person name="Ueda H.R."/>
            <person name="van Nimwegen E."/>
            <person name="Verardo R."/>
            <person name="Wei C.L."/>
            <person name="Yagi K."/>
            <person name="Yamanishi H."/>
            <person name="Zabarovsky E."/>
            <person name="Zhu S."/>
            <person name="Zimmer A."/>
            <person name="Hide W."/>
            <person name="Bult C."/>
            <person name="Grimmond S.M."/>
            <person name="Teasdale R.D."/>
            <person name="Liu E.T."/>
            <person name="Brusic V."/>
            <person name="Quackenbush J."/>
            <person name="Wahlestedt C."/>
            <person name="Mattick J.S."/>
            <person name="Hume D.A."/>
            <person name="Kai C."/>
            <person name="Sasaki D."/>
            <person name="Tomaru Y."/>
            <person name="Fukuda S."/>
            <person name="Kanamori-Katayama M."/>
            <person name="Suzuki M."/>
            <person name="Aoki J."/>
            <person name="Arakawa T."/>
            <person name="Iida J."/>
            <person name="Imamura K."/>
            <person name="Itoh M."/>
            <person name="Kato T."/>
            <person name="Kawaji H."/>
            <person name="Kawagashira N."/>
            <person name="Kawashima T."/>
            <person name="Kojima M."/>
            <person name="Kondo S."/>
            <person name="Konno H."/>
            <person name="Nakano K."/>
            <person name="Ninomiya N."/>
            <person name="Nishio T."/>
            <person name="Okada M."/>
            <person name="Plessy C."/>
            <person name="Shibata K."/>
            <person name="Shiraki T."/>
            <person name="Suzuki S."/>
            <person name="Tagami M."/>
            <person name="Waki K."/>
            <person name="Watahiki A."/>
            <person name="Okamura-Oho Y."/>
            <person name="Suzuki H."/>
            <person name="Kawai J."/>
            <person name="Hayashizaki Y."/>
        </authorList>
    </citation>
    <scope>NUCLEOTIDE SEQUENCE [LARGE SCALE MRNA]</scope>
    <source>
        <strain>NOD</strain>
        <tissue>Thymus</tissue>
    </source>
</reference>
<protein>
    <recommendedName>
        <fullName>Thymus-specific serine protease</fullName>
        <ecNumber>3.4.-.-</ecNumber>
    </recommendedName>
    <alternativeName>
        <fullName>Serine protease 16</fullName>
    </alternativeName>
</protein>
<proteinExistence type="evidence at transcript level"/>
<name>TSSP_MOUSE</name>